<proteinExistence type="inferred from homology"/>
<comment type="similarity">
    <text evidence="1">Belongs to the bacterial ribosomal protein bL35 family.</text>
</comment>
<feature type="chain" id="PRO_0000177453" description="Large ribosomal subunit protein bL35">
    <location>
        <begin position="1"/>
        <end position="64"/>
    </location>
</feature>
<gene>
    <name evidence="1" type="primary">rpmI</name>
    <name type="ordered locus">VP1281</name>
</gene>
<protein>
    <recommendedName>
        <fullName evidence="1">Large ribosomal subunit protein bL35</fullName>
    </recommendedName>
    <alternativeName>
        <fullName evidence="2">50S ribosomal protein L35</fullName>
    </alternativeName>
</protein>
<evidence type="ECO:0000255" key="1">
    <source>
        <dbReference type="HAMAP-Rule" id="MF_00514"/>
    </source>
</evidence>
<evidence type="ECO:0000305" key="2"/>
<keyword id="KW-0687">Ribonucleoprotein</keyword>
<keyword id="KW-0689">Ribosomal protein</keyword>
<organism>
    <name type="scientific">Vibrio parahaemolyticus serotype O3:K6 (strain RIMD 2210633)</name>
    <dbReference type="NCBI Taxonomy" id="223926"/>
    <lineage>
        <taxon>Bacteria</taxon>
        <taxon>Pseudomonadati</taxon>
        <taxon>Pseudomonadota</taxon>
        <taxon>Gammaproteobacteria</taxon>
        <taxon>Vibrionales</taxon>
        <taxon>Vibrionaceae</taxon>
        <taxon>Vibrio</taxon>
    </lineage>
</organism>
<dbReference type="EMBL" id="BA000031">
    <property type="protein sequence ID" value="BAC59544.1"/>
    <property type="molecule type" value="Genomic_DNA"/>
</dbReference>
<dbReference type="RefSeq" id="NP_797660.1">
    <property type="nucleotide sequence ID" value="NC_004603.1"/>
</dbReference>
<dbReference type="RefSeq" id="WP_005462620.1">
    <property type="nucleotide sequence ID" value="NC_004603.1"/>
</dbReference>
<dbReference type="SMR" id="Q87Q69"/>
<dbReference type="GeneID" id="1188786"/>
<dbReference type="KEGG" id="vpa:VP1281"/>
<dbReference type="PATRIC" id="fig|223926.6.peg.1222"/>
<dbReference type="eggNOG" id="COG0291">
    <property type="taxonomic scope" value="Bacteria"/>
</dbReference>
<dbReference type="HOGENOM" id="CLU_169643_4_3_6"/>
<dbReference type="Proteomes" id="UP000002493">
    <property type="component" value="Chromosome 1"/>
</dbReference>
<dbReference type="GO" id="GO:0022625">
    <property type="term" value="C:cytosolic large ribosomal subunit"/>
    <property type="evidence" value="ECO:0007669"/>
    <property type="project" value="TreeGrafter"/>
</dbReference>
<dbReference type="GO" id="GO:0003735">
    <property type="term" value="F:structural constituent of ribosome"/>
    <property type="evidence" value="ECO:0007669"/>
    <property type="project" value="InterPro"/>
</dbReference>
<dbReference type="GO" id="GO:0006412">
    <property type="term" value="P:translation"/>
    <property type="evidence" value="ECO:0007669"/>
    <property type="project" value="UniProtKB-UniRule"/>
</dbReference>
<dbReference type="FunFam" id="4.10.410.60:FF:000001">
    <property type="entry name" value="50S ribosomal protein L35"/>
    <property type="match status" value="1"/>
</dbReference>
<dbReference type="Gene3D" id="4.10.410.60">
    <property type="match status" value="1"/>
</dbReference>
<dbReference type="HAMAP" id="MF_00514">
    <property type="entry name" value="Ribosomal_bL35"/>
    <property type="match status" value="1"/>
</dbReference>
<dbReference type="InterPro" id="IPR001706">
    <property type="entry name" value="Ribosomal_bL35"/>
</dbReference>
<dbReference type="InterPro" id="IPR021137">
    <property type="entry name" value="Ribosomal_bL35-like"/>
</dbReference>
<dbReference type="InterPro" id="IPR018265">
    <property type="entry name" value="Ribosomal_bL35_CS"/>
</dbReference>
<dbReference type="InterPro" id="IPR037229">
    <property type="entry name" value="Ribosomal_bL35_sf"/>
</dbReference>
<dbReference type="NCBIfam" id="TIGR00001">
    <property type="entry name" value="rpmI_bact"/>
    <property type="match status" value="1"/>
</dbReference>
<dbReference type="PANTHER" id="PTHR33343">
    <property type="entry name" value="54S RIBOSOMAL PROTEIN BL35M"/>
    <property type="match status" value="1"/>
</dbReference>
<dbReference type="PANTHER" id="PTHR33343:SF1">
    <property type="entry name" value="LARGE RIBOSOMAL SUBUNIT PROTEIN BL35M"/>
    <property type="match status" value="1"/>
</dbReference>
<dbReference type="Pfam" id="PF01632">
    <property type="entry name" value="Ribosomal_L35p"/>
    <property type="match status" value="1"/>
</dbReference>
<dbReference type="PRINTS" id="PR00064">
    <property type="entry name" value="RIBOSOMALL35"/>
</dbReference>
<dbReference type="SUPFAM" id="SSF143034">
    <property type="entry name" value="L35p-like"/>
    <property type="match status" value="1"/>
</dbReference>
<dbReference type="PROSITE" id="PS00936">
    <property type="entry name" value="RIBOSOMAL_L35"/>
    <property type="match status" value="1"/>
</dbReference>
<sequence length="64" mass="7332">MPKMKTNKGAAKRFKKTAGGIKYKHATKRHILTKRTTKNKRQLRPNAILPRCEVAAVIRMLPYA</sequence>
<name>RL35_VIBPA</name>
<accession>Q87Q69</accession>
<reference key="1">
    <citation type="journal article" date="2003" name="Lancet">
        <title>Genome sequence of Vibrio parahaemolyticus: a pathogenic mechanism distinct from that of V. cholerae.</title>
        <authorList>
            <person name="Makino K."/>
            <person name="Oshima K."/>
            <person name="Kurokawa K."/>
            <person name="Yokoyama K."/>
            <person name="Uda T."/>
            <person name="Tagomori K."/>
            <person name="Iijima Y."/>
            <person name="Najima M."/>
            <person name="Nakano M."/>
            <person name="Yamashita A."/>
            <person name="Kubota Y."/>
            <person name="Kimura S."/>
            <person name="Yasunaga T."/>
            <person name="Honda T."/>
            <person name="Shinagawa H."/>
            <person name="Hattori M."/>
            <person name="Iida T."/>
        </authorList>
    </citation>
    <scope>NUCLEOTIDE SEQUENCE [LARGE SCALE GENOMIC DNA]</scope>
    <source>
        <strain>RIMD 2210633</strain>
    </source>
</reference>